<dbReference type="EMBL" id="GT277998">
    <property type="status" value="NOT_ANNOTATED_CDS"/>
    <property type="molecule type" value="mRNA"/>
</dbReference>
<dbReference type="EMBL" id="GT279116">
    <property type="status" value="NOT_ANNOTATED_CDS"/>
    <property type="molecule type" value="mRNA"/>
</dbReference>
<dbReference type="EMBL" id="GT280347">
    <property type="status" value="NOT_ANNOTATED_CDS"/>
    <property type="molecule type" value="mRNA"/>
</dbReference>
<dbReference type="EMBL" id="GT280520">
    <property type="status" value="NOT_ANNOTATED_CDS"/>
    <property type="molecule type" value="mRNA"/>
</dbReference>
<dbReference type="EMBL" id="GT280708">
    <property type="status" value="NOT_ANNOTATED_CDS"/>
    <property type="molecule type" value="mRNA"/>
</dbReference>
<dbReference type="EMBL" id="GT281273">
    <property type="status" value="NOT_ANNOTATED_CDS"/>
    <property type="molecule type" value="mRNA"/>
</dbReference>
<dbReference type="EMBL" id="GT281325">
    <property type="status" value="NOT_ANNOTATED_CDS"/>
    <property type="molecule type" value="mRNA"/>
</dbReference>
<dbReference type="EMBL" id="GT281479">
    <property type="status" value="NOT_ANNOTATED_CDS"/>
    <property type="molecule type" value="mRNA"/>
</dbReference>
<dbReference type="EMBL" id="GT282238">
    <property type="status" value="NOT_ANNOTATED_CDS"/>
    <property type="molecule type" value="mRNA"/>
</dbReference>
<dbReference type="EMBL" id="GT282452">
    <property type="status" value="NOT_ANNOTATED_CDS"/>
    <property type="molecule type" value="mRNA"/>
</dbReference>
<dbReference type="EMBL" id="GT282632">
    <property type="status" value="NOT_ANNOTATED_CDS"/>
    <property type="molecule type" value="mRNA"/>
</dbReference>
<dbReference type="EMBL" id="GT282646">
    <property type="status" value="NOT_ANNOTATED_CDS"/>
    <property type="molecule type" value="mRNA"/>
</dbReference>
<dbReference type="EMBL" id="GT282710">
    <property type="status" value="NOT_ANNOTATED_CDS"/>
    <property type="molecule type" value="mRNA"/>
</dbReference>
<dbReference type="EMBL" id="GT282729">
    <property type="status" value="NOT_ANNOTATED_CDS"/>
    <property type="molecule type" value="mRNA"/>
</dbReference>
<dbReference type="EMBL" id="GT283005">
    <property type="status" value="NOT_ANNOTATED_CDS"/>
    <property type="molecule type" value="mRNA"/>
</dbReference>
<dbReference type="EMBL" id="GT283604">
    <property type="status" value="NOT_ANNOTATED_CDS"/>
    <property type="molecule type" value="mRNA"/>
</dbReference>
<dbReference type="EMBL" id="GT283616">
    <property type="status" value="NOT_ANNOTATED_CDS"/>
    <property type="molecule type" value="mRNA"/>
</dbReference>
<dbReference type="EMBL" id="GT283704">
    <property type="status" value="NOT_ANNOTATED_CDS"/>
    <property type="molecule type" value="mRNA"/>
</dbReference>
<dbReference type="EMBL" id="GT283832">
    <property type="status" value="NOT_ANNOTATED_CDS"/>
    <property type="molecule type" value="mRNA"/>
</dbReference>
<dbReference type="EMBL" id="GT284347">
    <property type="status" value="NOT_ANNOTATED_CDS"/>
    <property type="molecule type" value="mRNA"/>
</dbReference>
<dbReference type="EMBL" id="GT284449">
    <property type="status" value="NOT_ANNOTATED_CDS"/>
    <property type="molecule type" value="mRNA"/>
</dbReference>
<dbReference type="EMBL" id="EZ420144">
    <property type="status" value="NOT_ANNOTATED_CDS"/>
    <property type="molecule type" value="mRNA"/>
</dbReference>
<dbReference type="GO" id="GO:0005576">
    <property type="term" value="C:extracellular region"/>
    <property type="evidence" value="ECO:0007669"/>
    <property type="project" value="UniProtKB-SubCell"/>
</dbReference>
<accession>P86947</accession>
<name>VRP_PINMA</name>
<protein>
    <recommendedName>
        <fullName>Valine-rich protein</fullName>
    </recommendedName>
    <alternativeName>
        <fullName>Alveolin-like protein</fullName>
    </alternativeName>
</protein>
<comment type="subcellular location">
    <subcellularLocation>
        <location evidence="3">Secreted</location>
    </subcellularLocation>
</comment>
<comment type="tissue specificity">
    <text evidence="3">Prismatic layer of shell (at protein level). Expressed primarily in the mantle with highest level in the mantle edge and lower level in the mantle pallium.</text>
</comment>
<comment type="sequence caution" evidence="4">
    <conflict type="frameshift">
        <sequence resource="EMBL" id="GT280520"/>
    </conflict>
</comment>
<comment type="sequence caution" evidence="4">
    <conflict type="miscellaneous discrepancy">
        <sequence resource="EMBL" id="GT282238"/>
    </conflict>
    <text>Premature stop codon at position 213.</text>
</comment>
<comment type="sequence caution" evidence="4">
    <conflict type="frameshift">
        <sequence resource="EMBL" id="GT282710"/>
    </conflict>
</comment>
<comment type="sequence caution" evidence="4">
    <conflict type="frameshift">
        <sequence resource="EMBL" id="GT284449"/>
    </conflict>
</comment>
<organism>
    <name type="scientific">Pinctada maxima</name>
    <name type="common">Silver-lipped pearl oyster</name>
    <name type="synonym">White-lipped pearl oyster</name>
    <dbReference type="NCBI Taxonomy" id="104660"/>
    <lineage>
        <taxon>Eukaryota</taxon>
        <taxon>Metazoa</taxon>
        <taxon>Spiralia</taxon>
        <taxon>Lophotrochozoa</taxon>
        <taxon>Mollusca</taxon>
        <taxon>Bivalvia</taxon>
        <taxon>Autobranchia</taxon>
        <taxon>Pteriomorphia</taxon>
        <taxon>Pterioida</taxon>
        <taxon>Pterioidea</taxon>
        <taxon>Pteriidae</taxon>
        <taxon>Pinctada</taxon>
    </lineage>
</organism>
<reference evidence="4" key="1">
    <citation type="journal article" date="2010" name="Mol. Biol. Evol.">
        <title>Parallel evolution of nacre building gene sets in molluscs.</title>
        <authorList>
            <person name="Jackson D.J."/>
            <person name="McDougall C."/>
            <person name="Woodcroft B."/>
            <person name="Moase P."/>
            <person name="Rose R.A."/>
            <person name="Kube M."/>
            <person name="Reinhardt R."/>
            <person name="Rokhsar D.S."/>
            <person name="Montagnani C."/>
            <person name="Joubert C."/>
            <person name="Piquemal D."/>
            <person name="Degnan B.M."/>
        </authorList>
    </citation>
    <scope>NUCLEOTIDE SEQUENCE [MRNA]</scope>
    <scope>IDENTIFICATION</scope>
    <source>
        <tissue evidence="2">Mantle</tissue>
    </source>
</reference>
<reference key="2">
    <citation type="journal article" date="2012" name="Proc. Natl. Acad. Sci. U.S.A.">
        <title>Different secretory repertoires control the biomineralization processes of prism and nacre deposition of the pearl oyster shell.</title>
        <authorList>
            <person name="Marie B."/>
            <person name="Joubert C."/>
            <person name="Tayale A."/>
            <person name="Zanella-Cleon I."/>
            <person name="Belliard C."/>
            <person name="Piquemal D."/>
            <person name="Cochennec-Laureau N."/>
            <person name="Marin F."/>
            <person name="Gueguen Y."/>
            <person name="Montagnani C."/>
        </authorList>
    </citation>
    <scope>PROTEIN SEQUENCE OF 35-52; 93-120; 124-130 AND 173-210</scope>
    <scope>SUBCELLULAR LOCATION</scope>
    <scope>TISSUE SPECIFICITY</scope>
    <source>
        <tissue>Shell</tissue>
    </source>
</reference>
<evidence type="ECO:0000255" key="1"/>
<evidence type="ECO:0000269" key="2">
    <source>
    </source>
</evidence>
<evidence type="ECO:0000269" key="3">
    <source>
    </source>
</evidence>
<evidence type="ECO:0000305" key="4"/>
<feature type="signal peptide" evidence="1">
    <location>
        <begin position="1"/>
        <end position="16"/>
    </location>
</feature>
<feature type="chain" id="PRO_0000413081" description="Valine-rich protein" evidence="1">
    <location>
        <begin position="17"/>
        <end position="238"/>
    </location>
</feature>
<feature type="sequence conflict" description="In Ref. 1; GT282452." evidence="4" ref="1">
    <original>Q</original>
    <variation>P</variation>
    <location>
        <position position="106"/>
    </location>
</feature>
<feature type="sequence conflict" description="In Ref. 1; GT282452." evidence="4" ref="1">
    <original>K</original>
    <variation>R</variation>
    <location>
        <position position="113"/>
    </location>
</feature>
<feature type="sequence conflict" description="In Ref. 1; GT277998." evidence="4" ref="1">
    <original>R</original>
    <variation>K</variation>
    <location>
        <position position="130"/>
    </location>
</feature>
<feature type="sequence conflict" description="In Ref. 1; GT281479." evidence="4" ref="1">
    <original>Q</original>
    <variation>H</variation>
    <location>
        <position position="141"/>
    </location>
</feature>
<feature type="sequence conflict" description="In Ref. 1; GT280520." evidence="4" ref="1">
    <original>V</original>
    <variation>C</variation>
    <location>
        <position position="191"/>
    </location>
</feature>
<feature type="sequence conflict" description="In Ref. 1; GT281325/GT283832." evidence="4" ref="1">
    <original>E</original>
    <variation>K</variation>
    <location>
        <position position="200"/>
    </location>
</feature>
<feature type="sequence conflict" description="In Ref. 1; GT283005/GT280708." evidence="4" ref="1">
    <original>P</original>
    <variation>S</variation>
    <location>
        <position position="205"/>
    </location>
</feature>
<keyword id="KW-0903">Direct protein sequencing</keyword>
<keyword id="KW-0964">Secreted</keyword>
<keyword id="KW-0732">Signal</keyword>
<sequence length="238" mass="27079">MQAVLLVVALFGAALADPPKKIHLPTPKVKRVEKLAHQEHGVNVVQAVPITKTVVRTVNVPKTLIQEVPIHVYTDLVLKSPVPRRKVIDIKKTVLQPHIRHVPVDQPYVVHRKVPVIHTKIVRQPRPVPRIVNIPRLKVVQKQINRIIDVPRLVTRERVHRVIKPVPVVRTRVQHVDVDVPMRVVVPEPVVQDRHTQSVETVPVPHDVVRKVKVPKTFVLKDLIPVPEKAGRHYSSDK</sequence>
<proteinExistence type="evidence at protein level"/>